<feature type="chain" id="PRO_0000081091" description="Probable C4-dicarboxylate response regulator DctR">
    <location>
        <begin position="1"/>
        <end position="228"/>
    </location>
</feature>
<feature type="domain" description="Response regulatory" evidence="3">
    <location>
        <begin position="7"/>
        <end position="123"/>
    </location>
</feature>
<feature type="DNA-binding region" description="H-T-H motif" evidence="2">
    <location>
        <begin position="180"/>
        <end position="199"/>
    </location>
</feature>
<feature type="modified residue" description="4-aspartylphosphate" evidence="3">
    <location>
        <position position="58"/>
    </location>
</feature>
<proteinExistence type="inferred from homology"/>
<keyword id="KW-0010">Activator</keyword>
<keyword id="KW-0963">Cytoplasm</keyword>
<keyword id="KW-0238">DNA-binding</keyword>
<keyword id="KW-0597">Phosphoprotein</keyword>
<keyword id="KW-0804">Transcription</keyword>
<keyword id="KW-0805">Transcription regulation</keyword>
<keyword id="KW-0902">Two-component regulatory system</keyword>
<organism>
    <name type="scientific">Priestia megaterium</name>
    <name type="common">Bacillus megaterium</name>
    <dbReference type="NCBI Taxonomy" id="1404"/>
    <lineage>
        <taxon>Bacteria</taxon>
        <taxon>Bacillati</taxon>
        <taxon>Bacillota</taxon>
        <taxon>Bacilli</taxon>
        <taxon>Bacillales</taxon>
        <taxon>Bacillaceae</taxon>
        <taxon>Priestia</taxon>
    </lineage>
</organism>
<sequence>MNKKAWTVLLIEDDPMVQEVNRQFIEQVEGFTVIAAASNGLEGVQLIKQHQPDLTIIDMYMPSQDGLTTLQQIRANGYKTDVIAVTAASDIETVRKVLQYGAVDYIMKPFKFERMKQALEQYRSFQVKISQKEHITQSELDSMLFQQFEEKADLLPKGLNAVTLRRIQQYLSEQNHPISAEEVADGVGIARVTARRYLEFLEQENELKLSVEYGRVGRPINRYMLKIN</sequence>
<gene>
    <name type="primary">dctR</name>
</gene>
<name>DCTR_PRIMG</name>
<dbReference type="EMBL" id="D90043">
    <property type="protein sequence ID" value="BAA14097.1"/>
    <property type="molecule type" value="Genomic_DNA"/>
</dbReference>
<dbReference type="PIR" id="I39850">
    <property type="entry name" value="JS0383"/>
</dbReference>
<dbReference type="RefSeq" id="WP_013081863.1">
    <property type="nucleotide sequence ID" value="NZ_VKPR01000012.1"/>
</dbReference>
<dbReference type="SMR" id="P39486"/>
<dbReference type="PATRIC" id="fig|1404.33.peg.5370"/>
<dbReference type="GO" id="GO:0005737">
    <property type="term" value="C:cytoplasm"/>
    <property type="evidence" value="ECO:0007669"/>
    <property type="project" value="UniProtKB-SubCell"/>
</dbReference>
<dbReference type="GO" id="GO:0003677">
    <property type="term" value="F:DNA binding"/>
    <property type="evidence" value="ECO:0007669"/>
    <property type="project" value="UniProtKB-KW"/>
</dbReference>
<dbReference type="GO" id="GO:0003700">
    <property type="term" value="F:DNA-binding transcription factor activity"/>
    <property type="evidence" value="ECO:0007669"/>
    <property type="project" value="InterPro"/>
</dbReference>
<dbReference type="GO" id="GO:0000156">
    <property type="term" value="F:phosphorelay response regulator activity"/>
    <property type="evidence" value="ECO:0007669"/>
    <property type="project" value="TreeGrafter"/>
</dbReference>
<dbReference type="CDD" id="cd19925">
    <property type="entry name" value="REC_citrate_TCS"/>
    <property type="match status" value="1"/>
</dbReference>
<dbReference type="Gene3D" id="3.40.50.2300">
    <property type="match status" value="1"/>
</dbReference>
<dbReference type="Gene3D" id="1.10.10.10">
    <property type="entry name" value="Winged helix-like DNA-binding domain superfamily/Winged helix DNA-binding domain"/>
    <property type="match status" value="1"/>
</dbReference>
<dbReference type="InterPro" id="IPR051271">
    <property type="entry name" value="2C-system_Tx_regulators"/>
</dbReference>
<dbReference type="InterPro" id="IPR011006">
    <property type="entry name" value="CheY-like_superfamily"/>
</dbReference>
<dbReference type="InterPro" id="IPR048714">
    <property type="entry name" value="DpiA-like_HTH"/>
</dbReference>
<dbReference type="InterPro" id="IPR024187">
    <property type="entry name" value="Sig_transdc_resp-reg_cit/mal"/>
</dbReference>
<dbReference type="InterPro" id="IPR001789">
    <property type="entry name" value="Sig_transdc_resp-reg_receiver"/>
</dbReference>
<dbReference type="InterPro" id="IPR036388">
    <property type="entry name" value="WH-like_DNA-bd_sf"/>
</dbReference>
<dbReference type="InterPro" id="IPR036390">
    <property type="entry name" value="WH_DNA-bd_sf"/>
</dbReference>
<dbReference type="PANTHER" id="PTHR45526:SF1">
    <property type="entry name" value="TRANSCRIPTIONAL REGULATORY PROTEIN DCUR-RELATED"/>
    <property type="match status" value="1"/>
</dbReference>
<dbReference type="PANTHER" id="PTHR45526">
    <property type="entry name" value="TRANSCRIPTIONAL REGULATORY PROTEIN DPIA"/>
    <property type="match status" value="1"/>
</dbReference>
<dbReference type="Pfam" id="PF20714">
    <property type="entry name" value="HTH_64"/>
    <property type="match status" value="1"/>
</dbReference>
<dbReference type="Pfam" id="PF00072">
    <property type="entry name" value="Response_reg"/>
    <property type="match status" value="1"/>
</dbReference>
<dbReference type="PIRSF" id="PIRSF006171">
    <property type="entry name" value="RR_citrat_malat"/>
    <property type="match status" value="1"/>
</dbReference>
<dbReference type="SMART" id="SM00448">
    <property type="entry name" value="REC"/>
    <property type="match status" value="1"/>
</dbReference>
<dbReference type="SUPFAM" id="SSF52172">
    <property type="entry name" value="CheY-like"/>
    <property type="match status" value="1"/>
</dbReference>
<dbReference type="SUPFAM" id="SSF46785">
    <property type="entry name" value="Winged helix' DNA-binding domain"/>
    <property type="match status" value="1"/>
</dbReference>
<dbReference type="PROSITE" id="PS50110">
    <property type="entry name" value="RESPONSE_REGULATORY"/>
    <property type="match status" value="1"/>
</dbReference>
<reference key="1">
    <citation type="journal article" date="1990" name="J. Ferment. Bioeng.">
        <title>Structure of isozyme genes of glucose dehydrogenase from Bacillus megaterium IAM1030.</title>
        <authorList>
            <person name="Mitamura T."/>
            <person name="Ebora R.V."/>
            <person name="Nakai T."/>
            <person name="Makino Y."/>
            <person name="Negoro S."/>
            <person name="Urabe I."/>
            <person name="Okada H."/>
        </authorList>
    </citation>
    <scope>NUCLEOTIDE SEQUENCE [GENOMIC DNA]</scope>
    <source>
        <strain>IAM 1030 / JCM 20016</strain>
    </source>
</reference>
<protein>
    <recommendedName>
        <fullName>Probable C4-dicarboxylate response regulator DctR</fullName>
    </recommendedName>
</protein>
<comment type="function">
    <text evidence="1">Member of the two-component regulatory system DctS/DctR. Essential for expression of DctP (By similarity).</text>
</comment>
<comment type="subcellular location">
    <subcellularLocation>
        <location evidence="4">Cytoplasm</location>
    </subcellularLocation>
</comment>
<comment type="PTM">
    <text evidence="1">Phosphorylated by DctS.</text>
</comment>
<evidence type="ECO:0000250" key="1"/>
<evidence type="ECO:0000255" key="2"/>
<evidence type="ECO:0000255" key="3">
    <source>
        <dbReference type="PROSITE-ProRule" id="PRU00169"/>
    </source>
</evidence>
<evidence type="ECO:0000305" key="4"/>
<accession>P39486</accession>